<comment type="function">
    <text evidence="1">Necessary for efficient RNA polymerase transcription elongation past template-encoded arresting sites. The arresting sites in DNA have the property of trapping a certain fraction of elongating RNA polymerases that pass through, resulting in locked ternary complexes. Cleavage of the nascent transcript by cleavage factors such as GreA or GreB allows the resumption of elongation from the new 3'terminus. GreB releases sequences of up to 9 nucleotides in length.</text>
</comment>
<comment type="similarity">
    <text evidence="1">Belongs to the GreA/GreB family. GreB subfamily.</text>
</comment>
<comment type="sequence caution" evidence="2">
    <conflict type="erroneous initiation">
        <sequence resource="EMBL-CDS" id="AAN82621"/>
    </conflict>
</comment>
<gene>
    <name evidence="1" type="primary">greB</name>
    <name type="ordered locus">c4183</name>
</gene>
<evidence type="ECO:0000255" key="1">
    <source>
        <dbReference type="HAMAP-Rule" id="MF_00930"/>
    </source>
</evidence>
<evidence type="ECO:0000305" key="2"/>
<dbReference type="EMBL" id="AE014075">
    <property type="protein sequence ID" value="AAN82621.1"/>
    <property type="status" value="ALT_INIT"/>
    <property type="molecule type" value="Genomic_DNA"/>
</dbReference>
<dbReference type="RefSeq" id="WP_000856744.1">
    <property type="nucleotide sequence ID" value="NZ_CP051263.1"/>
</dbReference>
<dbReference type="SMR" id="P64273"/>
<dbReference type="STRING" id="199310.c4183"/>
<dbReference type="GeneID" id="86862196"/>
<dbReference type="KEGG" id="ecc:c4183"/>
<dbReference type="eggNOG" id="COG0782">
    <property type="taxonomic scope" value="Bacteria"/>
</dbReference>
<dbReference type="HOGENOM" id="CLU_101379_3_0_6"/>
<dbReference type="Proteomes" id="UP000001410">
    <property type="component" value="Chromosome"/>
</dbReference>
<dbReference type="GO" id="GO:0003677">
    <property type="term" value="F:DNA binding"/>
    <property type="evidence" value="ECO:0007669"/>
    <property type="project" value="UniProtKB-UniRule"/>
</dbReference>
<dbReference type="GO" id="GO:0070063">
    <property type="term" value="F:RNA polymerase binding"/>
    <property type="evidence" value="ECO:0007669"/>
    <property type="project" value="InterPro"/>
</dbReference>
<dbReference type="GO" id="GO:0006354">
    <property type="term" value="P:DNA-templated transcription elongation"/>
    <property type="evidence" value="ECO:0007669"/>
    <property type="project" value="TreeGrafter"/>
</dbReference>
<dbReference type="GO" id="GO:0032784">
    <property type="term" value="P:regulation of DNA-templated transcription elongation"/>
    <property type="evidence" value="ECO:0007669"/>
    <property type="project" value="UniProtKB-UniRule"/>
</dbReference>
<dbReference type="FunFam" id="1.10.287.180:FF:000001">
    <property type="entry name" value="Transcription elongation factor GreA"/>
    <property type="match status" value="1"/>
</dbReference>
<dbReference type="FunFam" id="3.10.50.30:FF:000001">
    <property type="entry name" value="Transcription elongation factor GreA"/>
    <property type="match status" value="1"/>
</dbReference>
<dbReference type="Gene3D" id="3.10.50.30">
    <property type="entry name" value="Transcription elongation factor, GreA/GreB, C-terminal domain"/>
    <property type="match status" value="1"/>
</dbReference>
<dbReference type="Gene3D" id="1.10.287.180">
    <property type="entry name" value="Transcription elongation factor, GreA/GreB, N-terminal domain"/>
    <property type="match status" value="1"/>
</dbReference>
<dbReference type="HAMAP" id="MF_00105">
    <property type="entry name" value="GreA_GreB"/>
    <property type="match status" value="1"/>
</dbReference>
<dbReference type="HAMAP" id="MF_00930">
    <property type="entry name" value="GreB"/>
    <property type="match status" value="1"/>
</dbReference>
<dbReference type="InterPro" id="IPR036953">
    <property type="entry name" value="GreA/GreB_C_sf"/>
</dbReference>
<dbReference type="InterPro" id="IPR018151">
    <property type="entry name" value="TF_GreA/GreB_CS"/>
</dbReference>
<dbReference type="InterPro" id="IPR028624">
    <property type="entry name" value="Tscrpt_elong_fac_GreA/B"/>
</dbReference>
<dbReference type="InterPro" id="IPR001437">
    <property type="entry name" value="Tscrpt_elong_fac_GreA/B_C"/>
</dbReference>
<dbReference type="InterPro" id="IPR023459">
    <property type="entry name" value="Tscrpt_elong_fac_GreA/B_fam"/>
</dbReference>
<dbReference type="InterPro" id="IPR022691">
    <property type="entry name" value="Tscrpt_elong_fac_GreA/B_N"/>
</dbReference>
<dbReference type="InterPro" id="IPR036805">
    <property type="entry name" value="Tscrpt_elong_fac_GreA/B_N_sf"/>
</dbReference>
<dbReference type="InterPro" id="IPR006358">
    <property type="entry name" value="Tscrpt_elong_fac_GreB"/>
</dbReference>
<dbReference type="NCBIfam" id="TIGR01461">
    <property type="entry name" value="greB"/>
    <property type="match status" value="1"/>
</dbReference>
<dbReference type="NCBIfam" id="NF002506">
    <property type="entry name" value="PRK01885.1"/>
    <property type="match status" value="1"/>
</dbReference>
<dbReference type="PANTHER" id="PTHR30437">
    <property type="entry name" value="TRANSCRIPTION ELONGATION FACTOR GREA"/>
    <property type="match status" value="1"/>
</dbReference>
<dbReference type="PANTHER" id="PTHR30437:SF6">
    <property type="entry name" value="TRANSCRIPTION ELONGATION FACTOR GREB"/>
    <property type="match status" value="1"/>
</dbReference>
<dbReference type="Pfam" id="PF01272">
    <property type="entry name" value="GreA_GreB"/>
    <property type="match status" value="1"/>
</dbReference>
<dbReference type="Pfam" id="PF03449">
    <property type="entry name" value="GreA_GreB_N"/>
    <property type="match status" value="1"/>
</dbReference>
<dbReference type="PIRSF" id="PIRSF006092">
    <property type="entry name" value="GreA_GreB"/>
    <property type="match status" value="1"/>
</dbReference>
<dbReference type="SUPFAM" id="SSF54534">
    <property type="entry name" value="FKBP-like"/>
    <property type="match status" value="1"/>
</dbReference>
<dbReference type="SUPFAM" id="SSF46557">
    <property type="entry name" value="GreA transcript cleavage protein, N-terminal domain"/>
    <property type="match status" value="1"/>
</dbReference>
<dbReference type="PROSITE" id="PS00829">
    <property type="entry name" value="GREAB_1"/>
    <property type="match status" value="1"/>
</dbReference>
<dbReference type="PROSITE" id="PS00830">
    <property type="entry name" value="GREAB_2"/>
    <property type="match status" value="1"/>
</dbReference>
<keyword id="KW-0238">DNA-binding</keyword>
<keyword id="KW-1185">Reference proteome</keyword>
<keyword id="KW-0804">Transcription</keyword>
<keyword id="KW-0805">Transcription regulation</keyword>
<name>GREB_ECOL6</name>
<reference key="1">
    <citation type="journal article" date="2002" name="Proc. Natl. Acad. Sci. U.S.A.">
        <title>Extensive mosaic structure revealed by the complete genome sequence of uropathogenic Escherichia coli.</title>
        <authorList>
            <person name="Welch R.A."/>
            <person name="Burland V."/>
            <person name="Plunkett G. III"/>
            <person name="Redford P."/>
            <person name="Roesch P."/>
            <person name="Rasko D."/>
            <person name="Buckles E.L."/>
            <person name="Liou S.-R."/>
            <person name="Boutin A."/>
            <person name="Hackett J."/>
            <person name="Stroud D."/>
            <person name="Mayhew G.F."/>
            <person name="Rose D.J."/>
            <person name="Zhou S."/>
            <person name="Schwartz D.C."/>
            <person name="Perna N.T."/>
            <person name="Mobley H.L.T."/>
            <person name="Donnenberg M.S."/>
            <person name="Blattner F.R."/>
        </authorList>
    </citation>
    <scope>NUCLEOTIDE SEQUENCE [LARGE SCALE GENOMIC DNA]</scope>
    <source>
        <strain>CFT073 / ATCC 700928 / UPEC</strain>
    </source>
</reference>
<proteinExistence type="inferred from homology"/>
<organism>
    <name type="scientific">Escherichia coli O6:H1 (strain CFT073 / ATCC 700928 / UPEC)</name>
    <dbReference type="NCBI Taxonomy" id="199310"/>
    <lineage>
        <taxon>Bacteria</taxon>
        <taxon>Pseudomonadati</taxon>
        <taxon>Pseudomonadota</taxon>
        <taxon>Gammaproteobacteria</taxon>
        <taxon>Enterobacterales</taxon>
        <taxon>Enterobacteriaceae</taxon>
        <taxon>Escherichia</taxon>
    </lineage>
</organism>
<accession>P64273</accession>
<accession>Q8X729</accession>
<protein>
    <recommendedName>
        <fullName evidence="1">Transcription elongation factor GreB</fullName>
    </recommendedName>
    <alternativeName>
        <fullName evidence="1">Transcript cleavage factor GreB</fullName>
    </alternativeName>
</protein>
<sequence length="158" mass="18545">MKTPLVTREGYEKLKQELNYLWREERPEVTKKVTWAASLGDRSENADYQYNKKRLREIDRRVRYLTKCMENLKIVDYSPQQEGKVFFGAWVEIENDDGVTHRFRIVGYDEIFGRKDYISIDSPMARALLKKEVGDLAVVNTPAGEASWYVNAIEYVKP</sequence>
<feature type="chain" id="PRO_0000176924" description="Transcription elongation factor GreB">
    <location>
        <begin position="1"/>
        <end position="158"/>
    </location>
</feature>